<keyword id="KW-0012">Acyltransferase</keyword>
<keyword id="KW-0997">Cell inner membrane</keyword>
<keyword id="KW-1003">Cell membrane</keyword>
<keyword id="KW-0444">Lipid biosynthesis</keyword>
<keyword id="KW-0443">Lipid metabolism</keyword>
<keyword id="KW-0472">Membrane</keyword>
<keyword id="KW-0594">Phospholipid biosynthesis</keyword>
<keyword id="KW-1208">Phospholipid metabolism</keyword>
<keyword id="KW-1185">Reference proteome</keyword>
<keyword id="KW-0808">Transferase</keyword>
<reference key="1">
    <citation type="journal article" date="2010" name="BMC Genomics">
        <title>A genomic perspective on the potential of Actinobacillus succinogenes for industrial succinate production.</title>
        <authorList>
            <person name="McKinlay J.B."/>
            <person name="Laivenieks M."/>
            <person name="Schindler B.D."/>
            <person name="McKinlay A.A."/>
            <person name="Siddaramappa S."/>
            <person name="Challacombe J.F."/>
            <person name="Lowry S.R."/>
            <person name="Clum A."/>
            <person name="Lapidus A.L."/>
            <person name="Burkhart K.B."/>
            <person name="Harkins V."/>
            <person name="Vieille C."/>
        </authorList>
    </citation>
    <scope>NUCLEOTIDE SEQUENCE [LARGE SCALE GENOMIC DNA]</scope>
    <source>
        <strain>ATCC 55618 / DSM 22257 / CCUG 43843 / 130Z</strain>
    </source>
</reference>
<gene>
    <name evidence="1" type="primary">plsB</name>
    <name type="ordered locus">Asuc_1763</name>
</gene>
<comment type="catalytic activity">
    <reaction evidence="1">
        <text>sn-glycerol 3-phosphate + an acyl-CoA = a 1-acyl-sn-glycero-3-phosphate + CoA</text>
        <dbReference type="Rhea" id="RHEA:15325"/>
        <dbReference type="ChEBI" id="CHEBI:57287"/>
        <dbReference type="ChEBI" id="CHEBI:57597"/>
        <dbReference type="ChEBI" id="CHEBI:57970"/>
        <dbReference type="ChEBI" id="CHEBI:58342"/>
        <dbReference type="EC" id="2.3.1.15"/>
    </reaction>
</comment>
<comment type="pathway">
    <text evidence="1">Phospholipid metabolism; CDP-diacylglycerol biosynthesis; CDP-diacylglycerol from sn-glycerol 3-phosphate: step 1/3.</text>
</comment>
<comment type="subcellular location">
    <subcellularLocation>
        <location evidence="1">Cell inner membrane</location>
        <topology evidence="1">Peripheral membrane protein</topology>
        <orientation evidence="1">Cytoplasmic side</orientation>
    </subcellularLocation>
</comment>
<comment type="domain">
    <text evidence="1">The HXXXXD motif is essential for acyltransferase activity and may constitute the binding site for the phosphate moiety of the glycerol-3-phosphate.</text>
</comment>
<comment type="similarity">
    <text evidence="1">Belongs to the GPAT/DAPAT family.</text>
</comment>
<organism>
    <name type="scientific">Actinobacillus succinogenes (strain ATCC 55618 / DSM 22257 / CCUG 43843 / 130Z)</name>
    <dbReference type="NCBI Taxonomy" id="339671"/>
    <lineage>
        <taxon>Bacteria</taxon>
        <taxon>Pseudomonadati</taxon>
        <taxon>Pseudomonadota</taxon>
        <taxon>Gammaproteobacteria</taxon>
        <taxon>Pasteurellales</taxon>
        <taxon>Pasteurellaceae</taxon>
        <taxon>Actinobacillus</taxon>
    </lineage>
</organism>
<evidence type="ECO:0000255" key="1">
    <source>
        <dbReference type="HAMAP-Rule" id="MF_00393"/>
    </source>
</evidence>
<proteinExistence type="inferred from homology"/>
<protein>
    <recommendedName>
        <fullName evidence="1">Glycerol-3-phosphate acyltransferase</fullName>
        <shortName evidence="1">GPAT</shortName>
        <ecNumber evidence="1">2.3.1.15</ecNumber>
    </recommendedName>
</protein>
<sequence>MSAFLNLYRNTLSWPLSFLVKDNPIPNNPVEELTLNIEQPIVYVLPYTSQTDLVVLRKNCLSLGLPDPFLDNRIEGKVLPRYVFLDEGHQFFKSKGAKKETEKVFKNYLELHRTSADLDVQVVPVSVLWGRSPGREDKGLPKLRLLNGLQKTIAAIWFGRDTFVRFSQAMSMRYMVNEYGEDEKLAQKLPRIAKMHFAKQRISATGPRLPNRQAMFNKLLQHPAVLQAIEDEARGKNMTKEKARKEAEKILNEIAADTNYSSLRVADRLLGWLWNKLYQGIEVEHADRVRRLALEGHEIVYVPCHRSHIDYLLLSYVLYHQGLVPPHIAAGINLNFWPVGRIFRSWGAFFIRRTFKGNRLYSTLFREYLGELFHRGYSVEYFIEGGRSRTGRLLTPKTGMMSMTLQALQQGQTRPISIVPVYVGYEHVLEVDTYAKELRGAAKEKENAGLVLRVIKKLRNLGRGFVNFGEPITLSTYLNRHFPEWKNEGRDERPLWFNKAVDAVSRQVMVNINKAAAVNAMNLTGTALLSSRQRALSREQLLEQLESYQQYLLNVSYSDDIIIPSAPPKELLDHVLGLDRVGILIEKDNFGELVRLERNHAVLMTYYRNNIQHLLVLPSLVASIVLHHEAIQKDLVLTSVEKLYPFLKAELFMHLPPEALREKVERIIAELHRQQLIKLNENILSINRPRVRTLQLWSAGMREILQRYLITVAILLQDPAISRGKLEKESQSIAQRLSVLHGINSPEFFDKAVFSTFIASLKDNGYFDTSGNADVTKLQGMADILEHVISTEINLTIKSAVETAVDLDEIESE</sequence>
<dbReference type="EC" id="2.3.1.15" evidence="1"/>
<dbReference type="EMBL" id="CP000746">
    <property type="protein sequence ID" value="ABR75115.1"/>
    <property type="molecule type" value="Genomic_DNA"/>
</dbReference>
<dbReference type="RefSeq" id="WP_012073492.1">
    <property type="nucleotide sequence ID" value="NC_009655.1"/>
</dbReference>
<dbReference type="SMR" id="A6VQ68"/>
<dbReference type="STRING" id="339671.Asuc_1763"/>
<dbReference type="KEGG" id="asu:Asuc_1763"/>
<dbReference type="eggNOG" id="COG2937">
    <property type="taxonomic scope" value="Bacteria"/>
</dbReference>
<dbReference type="HOGENOM" id="CLU_015407_0_0_6"/>
<dbReference type="OrthoDB" id="335193at2"/>
<dbReference type="UniPathway" id="UPA00557">
    <property type="reaction ID" value="UER00612"/>
</dbReference>
<dbReference type="Proteomes" id="UP000001114">
    <property type="component" value="Chromosome"/>
</dbReference>
<dbReference type="GO" id="GO:0005886">
    <property type="term" value="C:plasma membrane"/>
    <property type="evidence" value="ECO:0007669"/>
    <property type="project" value="UniProtKB-SubCell"/>
</dbReference>
<dbReference type="GO" id="GO:0004366">
    <property type="term" value="F:glycerol-3-phosphate O-acyltransferase activity"/>
    <property type="evidence" value="ECO:0007669"/>
    <property type="project" value="UniProtKB-UniRule"/>
</dbReference>
<dbReference type="GO" id="GO:0016024">
    <property type="term" value="P:CDP-diacylglycerol biosynthetic process"/>
    <property type="evidence" value="ECO:0007669"/>
    <property type="project" value="UniProtKB-UniRule"/>
</dbReference>
<dbReference type="GO" id="GO:0006631">
    <property type="term" value="P:fatty acid metabolic process"/>
    <property type="evidence" value="ECO:0007669"/>
    <property type="project" value="TreeGrafter"/>
</dbReference>
<dbReference type="CDD" id="cd07993">
    <property type="entry name" value="LPLAT_DHAPAT-like"/>
    <property type="match status" value="1"/>
</dbReference>
<dbReference type="HAMAP" id="MF_00393">
    <property type="entry name" value="Glyc3P_acyltrans"/>
    <property type="match status" value="1"/>
</dbReference>
<dbReference type="InterPro" id="IPR022284">
    <property type="entry name" value="GPAT/DHAPAT"/>
</dbReference>
<dbReference type="InterPro" id="IPR045520">
    <property type="entry name" value="GPAT/DHAPAT_C"/>
</dbReference>
<dbReference type="InterPro" id="IPR041728">
    <property type="entry name" value="GPAT/DHAPAT_LPLAT"/>
</dbReference>
<dbReference type="InterPro" id="IPR028354">
    <property type="entry name" value="GPAT_PlsB"/>
</dbReference>
<dbReference type="InterPro" id="IPR002123">
    <property type="entry name" value="Plipid/glycerol_acylTrfase"/>
</dbReference>
<dbReference type="NCBIfam" id="TIGR03703">
    <property type="entry name" value="plsB"/>
    <property type="match status" value="1"/>
</dbReference>
<dbReference type="NCBIfam" id="NF003441">
    <property type="entry name" value="PRK04974.1"/>
    <property type="match status" value="1"/>
</dbReference>
<dbReference type="PANTHER" id="PTHR12563:SF17">
    <property type="entry name" value="DIHYDROXYACETONE PHOSPHATE ACYLTRANSFERASE"/>
    <property type="match status" value="1"/>
</dbReference>
<dbReference type="PANTHER" id="PTHR12563">
    <property type="entry name" value="GLYCEROL-3-PHOSPHATE ACYLTRANSFERASE"/>
    <property type="match status" value="1"/>
</dbReference>
<dbReference type="Pfam" id="PF01553">
    <property type="entry name" value="Acyltransferase"/>
    <property type="match status" value="1"/>
</dbReference>
<dbReference type="Pfam" id="PF19277">
    <property type="entry name" value="GPAT_C"/>
    <property type="match status" value="1"/>
</dbReference>
<dbReference type="PIRSF" id="PIRSF500064">
    <property type="entry name" value="GPAT"/>
    <property type="match status" value="1"/>
</dbReference>
<dbReference type="PIRSF" id="PIRSF000437">
    <property type="entry name" value="GPAT_DHAPAT"/>
    <property type="match status" value="1"/>
</dbReference>
<dbReference type="SMART" id="SM00563">
    <property type="entry name" value="PlsC"/>
    <property type="match status" value="1"/>
</dbReference>
<dbReference type="SUPFAM" id="SSF69593">
    <property type="entry name" value="Glycerol-3-phosphate (1)-acyltransferase"/>
    <property type="match status" value="1"/>
</dbReference>
<accession>A6VQ68</accession>
<name>PLSB_ACTSZ</name>
<feature type="chain" id="PRO_1000072227" description="Glycerol-3-phosphate acyltransferase">
    <location>
        <begin position="1"/>
        <end position="813"/>
    </location>
</feature>
<feature type="short sequence motif" description="HXXXXD motif">
    <location>
        <begin position="304"/>
        <end position="309"/>
    </location>
</feature>